<protein>
    <recommendedName>
        <fullName evidence="1">5-oxoprolinase subunit A</fullName>
        <shortName evidence="1">5-OPase subunit A</shortName>
        <ecNumber evidence="1">3.5.2.9</ecNumber>
    </recommendedName>
    <alternativeName>
        <fullName evidence="1">5-oxoprolinase (ATP-hydrolyzing) subunit A</fullName>
    </alternativeName>
</protein>
<reference key="1">
    <citation type="journal article" date="2006" name="J. Bacteriol.">
        <title>Complete genome sequence of Yersinia pestis strains Antiqua and Nepal516: evidence of gene reduction in an emerging pathogen.</title>
        <authorList>
            <person name="Chain P.S.G."/>
            <person name="Hu P."/>
            <person name="Malfatti S.A."/>
            <person name="Radnedge L."/>
            <person name="Larimer F."/>
            <person name="Vergez L.M."/>
            <person name="Worsham P."/>
            <person name="Chu M.C."/>
            <person name="Andersen G.L."/>
        </authorList>
    </citation>
    <scope>NUCLEOTIDE SEQUENCE [LARGE SCALE GENOMIC DNA]</scope>
    <source>
        <strain>Nepal516</strain>
    </source>
</reference>
<reference key="2">
    <citation type="submission" date="2009-04" db="EMBL/GenBank/DDBJ databases">
        <title>Yersinia pestis Nepal516A whole genome shotgun sequencing project.</title>
        <authorList>
            <person name="Plunkett G. III"/>
            <person name="Anderson B.D."/>
            <person name="Baumler D.J."/>
            <person name="Burland V."/>
            <person name="Cabot E.L."/>
            <person name="Glasner J.D."/>
            <person name="Mau B."/>
            <person name="Neeno-Eckwall E."/>
            <person name="Perna N.T."/>
            <person name="Munk A.C."/>
            <person name="Tapia R."/>
            <person name="Green L.D."/>
            <person name="Rogers Y.C."/>
            <person name="Detter J.C."/>
            <person name="Bruce D.C."/>
            <person name="Brettin T.S."/>
        </authorList>
    </citation>
    <scope>NUCLEOTIDE SEQUENCE [LARGE SCALE GENOMIC DNA]</scope>
    <source>
        <strain>Nepal516</strain>
    </source>
</reference>
<feature type="chain" id="PRO_1000045233" description="5-oxoprolinase subunit A">
    <location>
        <begin position="1"/>
        <end position="245"/>
    </location>
</feature>
<gene>
    <name evidence="1" type="primary">pxpA</name>
    <name type="ordered locus">YPN_1188</name>
    <name type="ORF">YP516_1299</name>
</gene>
<sequence length="245" mass="26281">MKIDLNADLGEGCANDQALLQLVSSANIACGFHAGDAQTMRQSVRWALEYGVAIGAHPSFPDRENFGRTAMQLPPETVYAQVVYQLGALAAIVQVEGGVMQHVKPHGMLYNQAAVDPLLADAIAQAVKAVDPSLRLVGLAGSELIRAGTRVGLVTRQEVFADRHYQPDGTLVPRSQPDALIESDELALSQTLAMVQQHQVQACDGSWVQVQADTVCVHGDGVQALAFARCLRDRFQQEGISVIAQ</sequence>
<accession>Q1CKG2</accession>
<accession>C4GRD1</accession>
<dbReference type="EC" id="3.5.2.9" evidence="1"/>
<dbReference type="EMBL" id="CP000305">
    <property type="protein sequence ID" value="ABG17518.1"/>
    <property type="molecule type" value="Genomic_DNA"/>
</dbReference>
<dbReference type="EMBL" id="ACNQ01000008">
    <property type="protein sequence ID" value="EEO77622.1"/>
    <property type="molecule type" value="Genomic_DNA"/>
</dbReference>
<dbReference type="RefSeq" id="WP_002209659.1">
    <property type="nucleotide sequence ID" value="NZ_ACNQ01000008.1"/>
</dbReference>
<dbReference type="SMR" id="Q1CKG2"/>
<dbReference type="GeneID" id="57975991"/>
<dbReference type="KEGG" id="ypn:YPN_1188"/>
<dbReference type="HOGENOM" id="CLU_069535_0_0_6"/>
<dbReference type="Proteomes" id="UP000008936">
    <property type="component" value="Chromosome"/>
</dbReference>
<dbReference type="GO" id="GO:0017168">
    <property type="term" value="F:5-oxoprolinase (ATP-hydrolyzing) activity"/>
    <property type="evidence" value="ECO:0007669"/>
    <property type="project" value="UniProtKB-UniRule"/>
</dbReference>
<dbReference type="GO" id="GO:0005524">
    <property type="term" value="F:ATP binding"/>
    <property type="evidence" value="ECO:0007669"/>
    <property type="project" value="UniProtKB-UniRule"/>
</dbReference>
<dbReference type="GO" id="GO:0005975">
    <property type="term" value="P:carbohydrate metabolic process"/>
    <property type="evidence" value="ECO:0007669"/>
    <property type="project" value="InterPro"/>
</dbReference>
<dbReference type="CDD" id="cd10800">
    <property type="entry name" value="LamB_YcsF_YbgL_like"/>
    <property type="match status" value="1"/>
</dbReference>
<dbReference type="Gene3D" id="3.20.20.370">
    <property type="entry name" value="Glycoside hydrolase/deacetylase"/>
    <property type="match status" value="1"/>
</dbReference>
<dbReference type="HAMAP" id="MF_00691">
    <property type="entry name" value="PxpA"/>
    <property type="match status" value="1"/>
</dbReference>
<dbReference type="InterPro" id="IPR011330">
    <property type="entry name" value="Glyco_hydro/deAcase_b/a-brl"/>
</dbReference>
<dbReference type="InterPro" id="IPR005501">
    <property type="entry name" value="LamB/YcsF/PxpA-like"/>
</dbReference>
<dbReference type="NCBIfam" id="NF003812">
    <property type="entry name" value="PRK05406.1-1"/>
    <property type="match status" value="1"/>
</dbReference>
<dbReference type="NCBIfam" id="NF003814">
    <property type="entry name" value="PRK05406.1-3"/>
    <property type="match status" value="1"/>
</dbReference>
<dbReference type="NCBIfam" id="NF003815">
    <property type="entry name" value="PRK05406.1-4"/>
    <property type="match status" value="1"/>
</dbReference>
<dbReference type="NCBIfam" id="NF003816">
    <property type="entry name" value="PRK05406.1-5"/>
    <property type="match status" value="1"/>
</dbReference>
<dbReference type="PANTHER" id="PTHR30292:SF0">
    <property type="entry name" value="5-OXOPROLINASE SUBUNIT A"/>
    <property type="match status" value="1"/>
</dbReference>
<dbReference type="PANTHER" id="PTHR30292">
    <property type="entry name" value="UNCHARACTERIZED PROTEIN YBGL-RELATED"/>
    <property type="match status" value="1"/>
</dbReference>
<dbReference type="Pfam" id="PF03746">
    <property type="entry name" value="LamB_YcsF"/>
    <property type="match status" value="1"/>
</dbReference>
<dbReference type="SUPFAM" id="SSF88713">
    <property type="entry name" value="Glycoside hydrolase/deacetylase"/>
    <property type="match status" value="1"/>
</dbReference>
<name>PXPA_YERPN</name>
<keyword id="KW-0067">ATP-binding</keyword>
<keyword id="KW-0378">Hydrolase</keyword>
<keyword id="KW-0547">Nucleotide-binding</keyword>
<evidence type="ECO:0000255" key="1">
    <source>
        <dbReference type="HAMAP-Rule" id="MF_00691"/>
    </source>
</evidence>
<proteinExistence type="inferred from homology"/>
<organism>
    <name type="scientific">Yersinia pestis bv. Antiqua (strain Nepal516)</name>
    <dbReference type="NCBI Taxonomy" id="377628"/>
    <lineage>
        <taxon>Bacteria</taxon>
        <taxon>Pseudomonadati</taxon>
        <taxon>Pseudomonadota</taxon>
        <taxon>Gammaproteobacteria</taxon>
        <taxon>Enterobacterales</taxon>
        <taxon>Yersiniaceae</taxon>
        <taxon>Yersinia</taxon>
    </lineage>
</organism>
<comment type="function">
    <text evidence="1">Catalyzes the cleavage of 5-oxoproline to form L-glutamate coupled to the hydrolysis of ATP to ADP and inorganic phosphate.</text>
</comment>
<comment type="catalytic activity">
    <reaction evidence="1">
        <text>5-oxo-L-proline + ATP + 2 H2O = L-glutamate + ADP + phosphate + H(+)</text>
        <dbReference type="Rhea" id="RHEA:10348"/>
        <dbReference type="ChEBI" id="CHEBI:15377"/>
        <dbReference type="ChEBI" id="CHEBI:15378"/>
        <dbReference type="ChEBI" id="CHEBI:29985"/>
        <dbReference type="ChEBI" id="CHEBI:30616"/>
        <dbReference type="ChEBI" id="CHEBI:43474"/>
        <dbReference type="ChEBI" id="CHEBI:58402"/>
        <dbReference type="ChEBI" id="CHEBI:456216"/>
        <dbReference type="EC" id="3.5.2.9"/>
    </reaction>
</comment>
<comment type="subunit">
    <text evidence="1">Forms a complex composed of PxpA, PxpB and PxpC.</text>
</comment>
<comment type="similarity">
    <text evidence="1">Belongs to the LamB/PxpA family.</text>
</comment>